<keyword id="KW-0131">Cell cycle</keyword>
<keyword id="KW-0132">Cell division</keyword>
<keyword id="KW-0133">Cell shape</keyword>
<keyword id="KW-0961">Cell wall biogenesis/degradation</keyword>
<keyword id="KW-0963">Cytoplasm</keyword>
<keyword id="KW-0573">Peptidoglycan synthesis</keyword>
<keyword id="KW-0670">Pyruvate</keyword>
<keyword id="KW-0808">Transferase</keyword>
<evidence type="ECO:0000255" key="1">
    <source>
        <dbReference type="HAMAP-Rule" id="MF_00111"/>
    </source>
</evidence>
<accession>Q6HAU9</accession>
<protein>
    <recommendedName>
        <fullName evidence="1">UDP-N-acetylglucosamine 1-carboxyvinyltransferase 2</fullName>
        <ecNumber evidence="1">2.5.1.7</ecNumber>
    </recommendedName>
    <alternativeName>
        <fullName evidence="1">Enoylpyruvate transferase 2</fullName>
    </alternativeName>
    <alternativeName>
        <fullName evidence="1">UDP-N-acetylglucosamine enolpyruvyl transferase 2</fullName>
        <shortName evidence="1">EPT 2</shortName>
    </alternativeName>
</protein>
<reference key="1">
    <citation type="journal article" date="2006" name="J. Bacteriol.">
        <title>Pathogenomic sequence analysis of Bacillus cereus and Bacillus thuringiensis isolates closely related to Bacillus anthracis.</title>
        <authorList>
            <person name="Han C.S."/>
            <person name="Xie G."/>
            <person name="Challacombe J.F."/>
            <person name="Altherr M.R."/>
            <person name="Bhotika S.S."/>
            <person name="Bruce D."/>
            <person name="Campbell C.S."/>
            <person name="Campbell M.L."/>
            <person name="Chen J."/>
            <person name="Chertkov O."/>
            <person name="Cleland C."/>
            <person name="Dimitrijevic M."/>
            <person name="Doggett N.A."/>
            <person name="Fawcett J.J."/>
            <person name="Glavina T."/>
            <person name="Goodwin L.A."/>
            <person name="Hill K.K."/>
            <person name="Hitchcock P."/>
            <person name="Jackson P.J."/>
            <person name="Keim P."/>
            <person name="Kewalramani A.R."/>
            <person name="Longmire J."/>
            <person name="Lucas S."/>
            <person name="Malfatti S."/>
            <person name="McMurry K."/>
            <person name="Meincke L.J."/>
            <person name="Misra M."/>
            <person name="Moseman B.L."/>
            <person name="Mundt M."/>
            <person name="Munk A.C."/>
            <person name="Okinaka R.T."/>
            <person name="Parson-Quintana B."/>
            <person name="Reilly L.P."/>
            <person name="Richardson P."/>
            <person name="Robinson D.L."/>
            <person name="Rubin E."/>
            <person name="Saunders E."/>
            <person name="Tapia R."/>
            <person name="Tesmer J.G."/>
            <person name="Thayer N."/>
            <person name="Thompson L.S."/>
            <person name="Tice H."/>
            <person name="Ticknor L.O."/>
            <person name="Wills P.L."/>
            <person name="Brettin T.S."/>
            <person name="Gilna P."/>
        </authorList>
    </citation>
    <scope>NUCLEOTIDE SEQUENCE [LARGE SCALE GENOMIC DNA]</scope>
    <source>
        <strain>97-27</strain>
    </source>
</reference>
<name>MURA2_BACHK</name>
<feature type="chain" id="PRO_0000231164" description="UDP-N-acetylglucosamine 1-carboxyvinyltransferase 2">
    <location>
        <begin position="1"/>
        <end position="429"/>
    </location>
</feature>
<feature type="active site" description="Proton donor" evidence="1">
    <location>
        <position position="117"/>
    </location>
</feature>
<feature type="binding site" evidence="1">
    <location>
        <begin position="22"/>
        <end position="23"/>
    </location>
    <ligand>
        <name>phosphoenolpyruvate</name>
        <dbReference type="ChEBI" id="CHEBI:58702"/>
    </ligand>
</feature>
<feature type="binding site" evidence="1">
    <location>
        <position position="93"/>
    </location>
    <ligand>
        <name>UDP-N-acetyl-alpha-D-glucosamine</name>
        <dbReference type="ChEBI" id="CHEBI:57705"/>
    </ligand>
</feature>
<feature type="binding site" evidence="1">
    <location>
        <begin position="122"/>
        <end position="126"/>
    </location>
    <ligand>
        <name>UDP-N-acetyl-alpha-D-glucosamine</name>
        <dbReference type="ChEBI" id="CHEBI:57705"/>
    </ligand>
</feature>
<feature type="binding site" evidence="1">
    <location>
        <position position="305"/>
    </location>
    <ligand>
        <name>UDP-N-acetyl-alpha-D-glucosamine</name>
        <dbReference type="ChEBI" id="CHEBI:57705"/>
    </ligand>
</feature>
<feature type="binding site" evidence="1">
    <location>
        <position position="327"/>
    </location>
    <ligand>
        <name>UDP-N-acetyl-alpha-D-glucosamine</name>
        <dbReference type="ChEBI" id="CHEBI:57705"/>
    </ligand>
</feature>
<feature type="modified residue" description="2-(S-cysteinyl)pyruvic acid O-phosphothioketal" evidence="1">
    <location>
        <position position="117"/>
    </location>
</feature>
<gene>
    <name evidence="1" type="primary">murA2</name>
    <name type="ordered locus">BT9727_5018</name>
</gene>
<comment type="function">
    <text evidence="1">Cell wall formation. Adds enolpyruvyl to UDP-N-acetylglucosamine.</text>
</comment>
<comment type="catalytic activity">
    <reaction evidence="1">
        <text>phosphoenolpyruvate + UDP-N-acetyl-alpha-D-glucosamine = UDP-N-acetyl-3-O-(1-carboxyvinyl)-alpha-D-glucosamine + phosphate</text>
        <dbReference type="Rhea" id="RHEA:18681"/>
        <dbReference type="ChEBI" id="CHEBI:43474"/>
        <dbReference type="ChEBI" id="CHEBI:57705"/>
        <dbReference type="ChEBI" id="CHEBI:58702"/>
        <dbReference type="ChEBI" id="CHEBI:68483"/>
        <dbReference type="EC" id="2.5.1.7"/>
    </reaction>
</comment>
<comment type="pathway">
    <text evidence="1">Cell wall biogenesis; peptidoglycan biosynthesis.</text>
</comment>
<comment type="subcellular location">
    <subcellularLocation>
        <location evidence="1">Cytoplasm</location>
    </subcellularLocation>
</comment>
<comment type="similarity">
    <text evidence="1">Belongs to the EPSP synthase family. MurA subfamily.</text>
</comment>
<dbReference type="EC" id="2.5.1.7" evidence="1"/>
<dbReference type="EMBL" id="AE017355">
    <property type="protein sequence ID" value="AAT62619.1"/>
    <property type="molecule type" value="Genomic_DNA"/>
</dbReference>
<dbReference type="RefSeq" id="YP_039327.1">
    <property type="nucleotide sequence ID" value="NC_005957.1"/>
</dbReference>
<dbReference type="SMR" id="Q6HAU9"/>
<dbReference type="KEGG" id="btk:BT9727_5018"/>
<dbReference type="PATRIC" id="fig|281309.8.peg.5337"/>
<dbReference type="HOGENOM" id="CLU_027387_0_0_9"/>
<dbReference type="UniPathway" id="UPA00219"/>
<dbReference type="Proteomes" id="UP000001301">
    <property type="component" value="Chromosome"/>
</dbReference>
<dbReference type="GO" id="GO:0005737">
    <property type="term" value="C:cytoplasm"/>
    <property type="evidence" value="ECO:0007669"/>
    <property type="project" value="UniProtKB-SubCell"/>
</dbReference>
<dbReference type="GO" id="GO:0008760">
    <property type="term" value="F:UDP-N-acetylglucosamine 1-carboxyvinyltransferase activity"/>
    <property type="evidence" value="ECO:0007669"/>
    <property type="project" value="UniProtKB-UniRule"/>
</dbReference>
<dbReference type="GO" id="GO:0051301">
    <property type="term" value="P:cell division"/>
    <property type="evidence" value="ECO:0007669"/>
    <property type="project" value="UniProtKB-KW"/>
</dbReference>
<dbReference type="GO" id="GO:0071555">
    <property type="term" value="P:cell wall organization"/>
    <property type="evidence" value="ECO:0007669"/>
    <property type="project" value="UniProtKB-KW"/>
</dbReference>
<dbReference type="GO" id="GO:0009252">
    <property type="term" value="P:peptidoglycan biosynthetic process"/>
    <property type="evidence" value="ECO:0007669"/>
    <property type="project" value="UniProtKB-UniRule"/>
</dbReference>
<dbReference type="GO" id="GO:0008360">
    <property type="term" value="P:regulation of cell shape"/>
    <property type="evidence" value="ECO:0007669"/>
    <property type="project" value="UniProtKB-KW"/>
</dbReference>
<dbReference type="GO" id="GO:0019277">
    <property type="term" value="P:UDP-N-acetylgalactosamine biosynthetic process"/>
    <property type="evidence" value="ECO:0007669"/>
    <property type="project" value="InterPro"/>
</dbReference>
<dbReference type="CDD" id="cd01555">
    <property type="entry name" value="UdpNAET"/>
    <property type="match status" value="1"/>
</dbReference>
<dbReference type="FunFam" id="3.65.10.10:FF:000001">
    <property type="entry name" value="UDP-N-acetylglucosamine 1-carboxyvinyltransferase"/>
    <property type="match status" value="1"/>
</dbReference>
<dbReference type="Gene3D" id="3.65.10.10">
    <property type="entry name" value="Enolpyruvate transferase domain"/>
    <property type="match status" value="2"/>
</dbReference>
<dbReference type="HAMAP" id="MF_00111">
    <property type="entry name" value="MurA"/>
    <property type="match status" value="1"/>
</dbReference>
<dbReference type="InterPro" id="IPR001986">
    <property type="entry name" value="Enolpyruvate_Tfrase_dom"/>
</dbReference>
<dbReference type="InterPro" id="IPR036968">
    <property type="entry name" value="Enolpyruvate_Tfrase_sf"/>
</dbReference>
<dbReference type="InterPro" id="IPR050068">
    <property type="entry name" value="MurA_subfamily"/>
</dbReference>
<dbReference type="InterPro" id="IPR013792">
    <property type="entry name" value="RNA3'P_cycl/enolpyr_Trfase_a/b"/>
</dbReference>
<dbReference type="InterPro" id="IPR005750">
    <property type="entry name" value="UDP_GlcNAc_COvinyl_MurA"/>
</dbReference>
<dbReference type="NCBIfam" id="TIGR01072">
    <property type="entry name" value="murA"/>
    <property type="match status" value="1"/>
</dbReference>
<dbReference type="NCBIfam" id="NF006873">
    <property type="entry name" value="PRK09369.1"/>
    <property type="match status" value="1"/>
</dbReference>
<dbReference type="NCBIfam" id="NF009470">
    <property type="entry name" value="PRK12830.1"/>
    <property type="match status" value="1"/>
</dbReference>
<dbReference type="PANTHER" id="PTHR43783">
    <property type="entry name" value="UDP-N-ACETYLGLUCOSAMINE 1-CARBOXYVINYLTRANSFERASE"/>
    <property type="match status" value="1"/>
</dbReference>
<dbReference type="PANTHER" id="PTHR43783:SF2">
    <property type="entry name" value="UDP-N-ACETYLGLUCOSAMINE 1-CARBOXYVINYLTRANSFERASE 2"/>
    <property type="match status" value="1"/>
</dbReference>
<dbReference type="Pfam" id="PF00275">
    <property type="entry name" value="EPSP_synthase"/>
    <property type="match status" value="1"/>
</dbReference>
<dbReference type="SUPFAM" id="SSF55205">
    <property type="entry name" value="EPT/RTPC-like"/>
    <property type="match status" value="1"/>
</dbReference>
<organism>
    <name type="scientific">Bacillus thuringiensis subsp. konkukian (strain 97-27)</name>
    <dbReference type="NCBI Taxonomy" id="281309"/>
    <lineage>
        <taxon>Bacteria</taxon>
        <taxon>Bacillati</taxon>
        <taxon>Bacillota</taxon>
        <taxon>Bacilli</taxon>
        <taxon>Bacillales</taxon>
        <taxon>Bacillaceae</taxon>
        <taxon>Bacillus</taxon>
        <taxon>Bacillus cereus group</taxon>
    </lineage>
</organism>
<proteinExistence type="inferred from homology"/>
<sequence length="429" mass="45866">MEKLLIEGGRALNGTIRVSGAKNSAVALIPATILADTPVTIGGVPNISDVKMLGDLLEEIGGRVTYGQEEEMVVDPSNMVAMPLPNGKVKKLRASYYLMGAMLGRFKKAVIGLPGGCHLGPRPIDQHIKGFEALGAHVTNEQGAIYLRADELRGARIYLDVVSVGATINIMLAAVRAKGRTVIENAAKEPEIIDVATLLTSMGARIKGAGTDVIRIDGVDSLHGCHHTIIPDRIEAGTYMILGAASGGEVTVDNVIPQHLESVTAKLREAGVQVETNDDQITVNGDRRLKVVDIKTLVYPGFPTDLQQPFTTLLTKAHGTGVVTDTIYGARFKHIDELRRMNAQIKVEGRSAIVTGPVLLQGAKVKASDLRAGAALVIAGLMADGITEVTGLEHIDRGYENIVDKLKGLGANIWREQMTKQEIEEMKNA</sequence>